<dbReference type="EMBL" id="CP000090">
    <property type="protein sequence ID" value="AAZ62821.1"/>
    <property type="molecule type" value="Genomic_DNA"/>
</dbReference>
<dbReference type="SMR" id="Q46VL3"/>
<dbReference type="STRING" id="264198.Reut_A3463"/>
<dbReference type="KEGG" id="reu:Reut_A3463"/>
<dbReference type="eggNOG" id="COG0230">
    <property type="taxonomic scope" value="Bacteria"/>
</dbReference>
<dbReference type="HOGENOM" id="CLU_129938_2_0_4"/>
<dbReference type="OrthoDB" id="9804164at2"/>
<dbReference type="GO" id="GO:1990904">
    <property type="term" value="C:ribonucleoprotein complex"/>
    <property type="evidence" value="ECO:0007669"/>
    <property type="project" value="UniProtKB-KW"/>
</dbReference>
<dbReference type="GO" id="GO:0005840">
    <property type="term" value="C:ribosome"/>
    <property type="evidence" value="ECO:0007669"/>
    <property type="project" value="UniProtKB-KW"/>
</dbReference>
<dbReference type="GO" id="GO:0003735">
    <property type="term" value="F:structural constituent of ribosome"/>
    <property type="evidence" value="ECO:0007669"/>
    <property type="project" value="InterPro"/>
</dbReference>
<dbReference type="GO" id="GO:0006412">
    <property type="term" value="P:translation"/>
    <property type="evidence" value="ECO:0007669"/>
    <property type="project" value="UniProtKB-UniRule"/>
</dbReference>
<dbReference type="FunFam" id="1.10.287.3980:FF:000001">
    <property type="entry name" value="Mitochondrial ribosomal protein L34"/>
    <property type="match status" value="1"/>
</dbReference>
<dbReference type="Gene3D" id="1.10.287.3980">
    <property type="match status" value="1"/>
</dbReference>
<dbReference type="HAMAP" id="MF_00391">
    <property type="entry name" value="Ribosomal_bL34"/>
    <property type="match status" value="1"/>
</dbReference>
<dbReference type="InterPro" id="IPR000271">
    <property type="entry name" value="Ribosomal_bL34"/>
</dbReference>
<dbReference type="InterPro" id="IPR020939">
    <property type="entry name" value="Ribosomal_bL34_CS"/>
</dbReference>
<dbReference type="NCBIfam" id="TIGR01030">
    <property type="entry name" value="rpmH_bact"/>
    <property type="match status" value="1"/>
</dbReference>
<dbReference type="PANTHER" id="PTHR14503:SF4">
    <property type="entry name" value="LARGE RIBOSOMAL SUBUNIT PROTEIN BL34M"/>
    <property type="match status" value="1"/>
</dbReference>
<dbReference type="PANTHER" id="PTHR14503">
    <property type="entry name" value="MITOCHONDRIAL RIBOSOMAL PROTEIN 34 FAMILY MEMBER"/>
    <property type="match status" value="1"/>
</dbReference>
<dbReference type="Pfam" id="PF00468">
    <property type="entry name" value="Ribosomal_L34"/>
    <property type="match status" value="1"/>
</dbReference>
<dbReference type="PROSITE" id="PS00784">
    <property type="entry name" value="RIBOSOMAL_L34"/>
    <property type="match status" value="1"/>
</dbReference>
<comment type="similarity">
    <text evidence="1">Belongs to the bacterial ribosomal protein bL34 family.</text>
</comment>
<protein>
    <recommendedName>
        <fullName evidence="1">Large ribosomal subunit protein bL34</fullName>
    </recommendedName>
    <alternativeName>
        <fullName evidence="2">50S ribosomal protein L34</fullName>
    </alternativeName>
</protein>
<sequence length="44" mass="5223">MKRTYQPSVTRRKRTHGFRVRMKTRGGRAVINARRAKGRKRLAI</sequence>
<feature type="chain" id="PRO_1000013418" description="Large ribosomal subunit protein bL34">
    <location>
        <begin position="1"/>
        <end position="44"/>
    </location>
</feature>
<name>RL34_CUPPJ</name>
<keyword id="KW-0687">Ribonucleoprotein</keyword>
<keyword id="KW-0689">Ribosomal protein</keyword>
<organism>
    <name type="scientific">Cupriavidus pinatubonensis (strain JMP 134 / LMG 1197)</name>
    <name type="common">Cupriavidus necator (strain JMP 134)</name>
    <dbReference type="NCBI Taxonomy" id="264198"/>
    <lineage>
        <taxon>Bacteria</taxon>
        <taxon>Pseudomonadati</taxon>
        <taxon>Pseudomonadota</taxon>
        <taxon>Betaproteobacteria</taxon>
        <taxon>Burkholderiales</taxon>
        <taxon>Burkholderiaceae</taxon>
        <taxon>Cupriavidus</taxon>
    </lineage>
</organism>
<evidence type="ECO:0000255" key="1">
    <source>
        <dbReference type="HAMAP-Rule" id="MF_00391"/>
    </source>
</evidence>
<evidence type="ECO:0000305" key="2"/>
<proteinExistence type="inferred from homology"/>
<gene>
    <name evidence="1" type="primary">rpmH</name>
    <name type="ordered locus">Reut_A3463</name>
</gene>
<accession>Q46VL3</accession>
<reference key="1">
    <citation type="journal article" date="2010" name="PLoS ONE">
        <title>The complete multipartite genome sequence of Cupriavidus necator JMP134, a versatile pollutant degrader.</title>
        <authorList>
            <person name="Lykidis A."/>
            <person name="Perez-Pantoja D."/>
            <person name="Ledger T."/>
            <person name="Mavromatis K."/>
            <person name="Anderson I.J."/>
            <person name="Ivanova N.N."/>
            <person name="Hooper S.D."/>
            <person name="Lapidus A."/>
            <person name="Lucas S."/>
            <person name="Gonzalez B."/>
            <person name="Kyrpides N.C."/>
        </authorList>
    </citation>
    <scope>NUCLEOTIDE SEQUENCE [LARGE SCALE GENOMIC DNA]</scope>
    <source>
        <strain>JMP134 / LMG 1197</strain>
    </source>
</reference>